<name>MODB_MYCBO</name>
<accession>P0A625</accession>
<accession>A0A1R3XZJ2</accession>
<accession>O08061</accession>
<accession>P95156</accession>
<accession>X2BJ95</accession>
<protein>
    <recommendedName>
        <fullName>Molybdenum transport system permease protein ModB</fullName>
    </recommendedName>
</protein>
<proteinExistence type="inferred from homology"/>
<gene>
    <name type="primary">modB</name>
    <name type="ordered locus">BQ2027_MB1889</name>
</gene>
<evidence type="ECO:0000255" key="1">
    <source>
        <dbReference type="PROSITE-ProRule" id="PRU00441"/>
    </source>
</evidence>
<evidence type="ECO:0000305" key="2"/>
<comment type="function">
    <text>Part of the binding-protein-dependent transport system ModABCD for molybdenum; probably responsible for the translocation of the substrate across the membrane.</text>
</comment>
<comment type="subcellular location">
    <subcellularLocation>
        <location evidence="2">Cell membrane</location>
        <topology evidence="1">Multi-pass membrane protein</topology>
    </subcellularLocation>
</comment>
<comment type="similarity">
    <text evidence="2">Belongs to the binding-protein-dependent transport system permease family. CysTW subfamily.</text>
</comment>
<reference key="1">
    <citation type="journal article" date="2003" name="Proc. Natl. Acad. Sci. U.S.A.">
        <title>The complete genome sequence of Mycobacterium bovis.</title>
        <authorList>
            <person name="Garnier T."/>
            <person name="Eiglmeier K."/>
            <person name="Camus J.-C."/>
            <person name="Medina N."/>
            <person name="Mansoor H."/>
            <person name="Pryor M."/>
            <person name="Duthoy S."/>
            <person name="Grondin S."/>
            <person name="Lacroix C."/>
            <person name="Monsempe C."/>
            <person name="Simon S."/>
            <person name="Harris B."/>
            <person name="Atkin R."/>
            <person name="Doggett J."/>
            <person name="Mayes R."/>
            <person name="Keating L."/>
            <person name="Wheeler P.R."/>
            <person name="Parkhill J."/>
            <person name="Barrell B.G."/>
            <person name="Cole S.T."/>
            <person name="Gordon S.V."/>
            <person name="Hewinson R.G."/>
        </authorList>
    </citation>
    <scope>NUCLEOTIDE SEQUENCE [LARGE SCALE GENOMIC DNA]</scope>
    <source>
        <strain>ATCC BAA-935 / AF2122/97</strain>
    </source>
</reference>
<reference key="2">
    <citation type="journal article" date="2017" name="Genome Announc.">
        <title>Updated reference genome sequence and annotation of Mycobacterium bovis AF2122/97.</title>
        <authorList>
            <person name="Malone K.M."/>
            <person name="Farrell D."/>
            <person name="Stuber T.P."/>
            <person name="Schubert O.T."/>
            <person name="Aebersold R."/>
            <person name="Robbe-Austerman S."/>
            <person name="Gordon S.V."/>
        </authorList>
    </citation>
    <scope>NUCLEOTIDE SEQUENCE [LARGE SCALE GENOMIC DNA]</scope>
    <scope>GENOME REANNOTATION</scope>
    <source>
        <strain>ATCC BAA-935 / AF2122/97</strain>
    </source>
</reference>
<sequence length="264" mass="27676">MHPPTDLPRWVYLPAIAGIVFVAMPLVAIAIRVDWPRFWALITTPSSQTALLLSVKTAAASTVLCVLLGVPMALVLARSRGRLVRSLRPLILLPLVLPPVVGGIALLYAFGRLGLIGRYLEAAGISIAFSTAAVVLAQTFVSLPYLVISLEGAARTAGADYEVVAATLGARPGTVWWRVTLPLLLPGVVSGSVLAFARSLGEFGATLTFAGSRQGVTRTLPLEIYLQRVTDPDAAVALSLLLVVVAALVVLGVGARTPIGTDTR</sequence>
<feature type="chain" id="PRO_0000060115" description="Molybdenum transport system permease protein ModB">
    <location>
        <begin position="1"/>
        <end position="264"/>
    </location>
</feature>
<feature type="transmembrane region" description="Helical" evidence="1">
    <location>
        <begin position="11"/>
        <end position="31"/>
    </location>
</feature>
<feature type="transmembrane region" description="Helical" evidence="1">
    <location>
        <begin position="57"/>
        <end position="77"/>
    </location>
</feature>
<feature type="transmembrane region" description="Helical" evidence="1">
    <location>
        <begin position="90"/>
        <end position="110"/>
    </location>
</feature>
<feature type="transmembrane region" description="Helical" evidence="1">
    <location>
        <begin position="127"/>
        <end position="147"/>
    </location>
</feature>
<feature type="transmembrane region" description="Helical" evidence="1">
    <location>
        <begin position="176"/>
        <end position="196"/>
    </location>
</feature>
<feature type="transmembrane region" description="Helical" evidence="1">
    <location>
        <begin position="234"/>
        <end position="254"/>
    </location>
</feature>
<feature type="domain" description="ABC transmembrane type-1" evidence="1">
    <location>
        <begin position="51"/>
        <end position="253"/>
    </location>
</feature>
<organism>
    <name type="scientific">Mycobacterium bovis (strain ATCC BAA-935 / AF2122/97)</name>
    <dbReference type="NCBI Taxonomy" id="233413"/>
    <lineage>
        <taxon>Bacteria</taxon>
        <taxon>Bacillati</taxon>
        <taxon>Actinomycetota</taxon>
        <taxon>Actinomycetes</taxon>
        <taxon>Mycobacteriales</taxon>
        <taxon>Mycobacteriaceae</taxon>
        <taxon>Mycobacterium</taxon>
        <taxon>Mycobacterium tuberculosis complex</taxon>
    </lineage>
</organism>
<keyword id="KW-1003">Cell membrane</keyword>
<keyword id="KW-0472">Membrane</keyword>
<keyword id="KW-0500">Molybdenum</keyword>
<keyword id="KW-1185">Reference proteome</keyword>
<keyword id="KW-0812">Transmembrane</keyword>
<keyword id="KW-1133">Transmembrane helix</keyword>
<keyword id="KW-0813">Transport</keyword>
<dbReference type="EMBL" id="LT708304">
    <property type="protein sequence ID" value="SIU00493.1"/>
    <property type="molecule type" value="Genomic_DNA"/>
</dbReference>
<dbReference type="RefSeq" id="NP_855541.1">
    <property type="nucleotide sequence ID" value="NC_002945.3"/>
</dbReference>
<dbReference type="RefSeq" id="WP_003409329.1">
    <property type="nucleotide sequence ID" value="NC_002945.4"/>
</dbReference>
<dbReference type="SMR" id="P0A625"/>
<dbReference type="KEGG" id="mbo:BQ2027_MB1889"/>
<dbReference type="PATRIC" id="fig|233413.5.peg.2070"/>
<dbReference type="Proteomes" id="UP000001419">
    <property type="component" value="Chromosome"/>
</dbReference>
<dbReference type="GO" id="GO:0005886">
    <property type="term" value="C:plasma membrane"/>
    <property type="evidence" value="ECO:0007669"/>
    <property type="project" value="UniProtKB-SubCell"/>
</dbReference>
<dbReference type="GO" id="GO:0015098">
    <property type="term" value="F:molybdate ion transmembrane transporter activity"/>
    <property type="evidence" value="ECO:0007669"/>
    <property type="project" value="InterPro"/>
</dbReference>
<dbReference type="CDD" id="cd06261">
    <property type="entry name" value="TM_PBP2"/>
    <property type="match status" value="1"/>
</dbReference>
<dbReference type="FunFam" id="1.10.3720.10:FF:000128">
    <property type="entry name" value="Molybdenum transport system permease"/>
    <property type="match status" value="1"/>
</dbReference>
<dbReference type="Gene3D" id="1.10.3720.10">
    <property type="entry name" value="MetI-like"/>
    <property type="match status" value="1"/>
</dbReference>
<dbReference type="InterPro" id="IPR000515">
    <property type="entry name" value="MetI-like"/>
</dbReference>
<dbReference type="InterPro" id="IPR035906">
    <property type="entry name" value="MetI-like_sf"/>
</dbReference>
<dbReference type="InterPro" id="IPR011867">
    <property type="entry name" value="ModB_ABC"/>
</dbReference>
<dbReference type="InterPro" id="IPR006469">
    <property type="entry name" value="NifC_ABC_porter"/>
</dbReference>
<dbReference type="NCBIfam" id="TIGR01581">
    <property type="entry name" value="Mo_ABC_porter"/>
    <property type="match status" value="1"/>
</dbReference>
<dbReference type="NCBIfam" id="TIGR02141">
    <property type="entry name" value="modB_ABC"/>
    <property type="match status" value="1"/>
</dbReference>
<dbReference type="PANTHER" id="PTHR30183">
    <property type="entry name" value="MOLYBDENUM TRANSPORT SYSTEM PERMEASE PROTEIN MODB"/>
    <property type="match status" value="1"/>
</dbReference>
<dbReference type="PANTHER" id="PTHR30183:SF3">
    <property type="entry name" value="MOLYBDENUM TRANSPORT SYSTEM PERMEASE PROTEIN MODB"/>
    <property type="match status" value="1"/>
</dbReference>
<dbReference type="Pfam" id="PF00528">
    <property type="entry name" value="BPD_transp_1"/>
    <property type="match status" value="1"/>
</dbReference>
<dbReference type="SUPFAM" id="SSF161098">
    <property type="entry name" value="MetI-like"/>
    <property type="match status" value="1"/>
</dbReference>
<dbReference type="PROSITE" id="PS50928">
    <property type="entry name" value="ABC_TM1"/>
    <property type="match status" value="1"/>
</dbReference>